<name>S130A_ARATH</name>
<feature type="chain" id="PRO_0000439506" description="Spliceosome-associated protein 130 A">
    <location>
        <begin position="1"/>
        <end position="1214"/>
    </location>
</feature>
<feature type="region of interest" description="Disordered" evidence="2">
    <location>
        <begin position="817"/>
        <end position="848"/>
    </location>
</feature>
<feature type="compositionally biased region" description="Acidic residues" evidence="2">
    <location>
        <begin position="834"/>
        <end position="845"/>
    </location>
</feature>
<feature type="sequence conflict" description="In Ref. 3; BAD94072." evidence="5" ref="3">
    <original>C</original>
    <variation>R</variation>
    <location>
        <position position="1154"/>
    </location>
</feature>
<dbReference type="EMBL" id="AL132954">
    <property type="protein sequence ID" value="CAB75754.1"/>
    <property type="molecule type" value="Genomic_DNA"/>
</dbReference>
<dbReference type="EMBL" id="CP002686">
    <property type="protein sequence ID" value="AEE79352.1"/>
    <property type="molecule type" value="Genomic_DNA"/>
</dbReference>
<dbReference type="EMBL" id="CP002686">
    <property type="protein sequence ID" value="ANM65660.1"/>
    <property type="molecule type" value="Genomic_DNA"/>
</dbReference>
<dbReference type="EMBL" id="CP002686">
    <property type="protein sequence ID" value="ANM65661.1"/>
    <property type="molecule type" value="Genomic_DNA"/>
</dbReference>
<dbReference type="EMBL" id="AK220805">
    <property type="protein sequence ID" value="BAD94072.1"/>
    <property type="molecule type" value="mRNA"/>
</dbReference>
<dbReference type="PIR" id="T47659">
    <property type="entry name" value="T47659"/>
</dbReference>
<dbReference type="RefSeq" id="NP_001319757.1">
    <property type="nucleotide sequence ID" value="NM_001339727.1"/>
</dbReference>
<dbReference type="RefSeq" id="NP_001327611.1">
    <property type="nucleotide sequence ID" value="NM_001339728.1"/>
</dbReference>
<dbReference type="RefSeq" id="NP_567015.1">
    <property type="nucleotide sequence ID" value="NM_115378.4"/>
</dbReference>
<dbReference type="SMR" id="P0DKL4"/>
<dbReference type="FunCoup" id="P0DKL4">
    <property type="interactions" value="4665"/>
</dbReference>
<dbReference type="STRING" id="3702.P0DKL4"/>
<dbReference type="GlyGen" id="P0DKL4">
    <property type="glycosylation" value="1 site"/>
</dbReference>
<dbReference type="PaxDb" id="3702-AT3G55200.1"/>
<dbReference type="EnsemblPlants" id="AT3G55200.1">
    <property type="protein sequence ID" value="AT3G55200.1"/>
    <property type="gene ID" value="AT3G55200"/>
</dbReference>
<dbReference type="EnsemblPlants" id="AT3G55200.2">
    <property type="protein sequence ID" value="AT3G55200.2"/>
    <property type="gene ID" value="AT3G55200"/>
</dbReference>
<dbReference type="EnsemblPlants" id="AT3G55200.3">
    <property type="protein sequence ID" value="AT3G55200.3"/>
    <property type="gene ID" value="AT3G55200"/>
</dbReference>
<dbReference type="EnsemblPlants" id="AT3G55220.1">
    <property type="protein sequence ID" value="AT3G55220.1"/>
    <property type="gene ID" value="AT3G55220"/>
</dbReference>
<dbReference type="GeneID" id="824686"/>
<dbReference type="Gramene" id="AT3G55200.1">
    <property type="protein sequence ID" value="AT3G55200.1"/>
    <property type="gene ID" value="AT3G55200"/>
</dbReference>
<dbReference type="Gramene" id="AT3G55200.2">
    <property type="protein sequence ID" value="AT3G55200.2"/>
    <property type="gene ID" value="AT3G55200"/>
</dbReference>
<dbReference type="Gramene" id="AT3G55200.3">
    <property type="protein sequence ID" value="AT3G55200.3"/>
    <property type="gene ID" value="AT3G55200"/>
</dbReference>
<dbReference type="Gramene" id="AT3G55220.1">
    <property type="protein sequence ID" value="AT3G55220.1"/>
    <property type="gene ID" value="AT3G55220"/>
</dbReference>
<dbReference type="KEGG" id="ath:AT3G55200"/>
<dbReference type="KEGG" id="ath:AT3G55220"/>
<dbReference type="Araport" id="AT3G55200"/>
<dbReference type="TAIR" id="AT3G55200">
    <property type="gene designation" value="SAP130A"/>
</dbReference>
<dbReference type="eggNOG" id="KOG1898">
    <property type="taxonomic scope" value="Eukaryota"/>
</dbReference>
<dbReference type="InParanoid" id="P0DKL4"/>
<dbReference type="OMA" id="PRATGHW"/>
<dbReference type="OrthoDB" id="1041414at2759"/>
<dbReference type="PRO" id="PR:P0DKL4"/>
<dbReference type="Proteomes" id="UP000006548">
    <property type="component" value="Chromosome 3"/>
</dbReference>
<dbReference type="ExpressionAtlas" id="P0DKL4">
    <property type="expression patterns" value="baseline and differential"/>
</dbReference>
<dbReference type="GO" id="GO:0005634">
    <property type="term" value="C:nucleus"/>
    <property type="evidence" value="ECO:0007669"/>
    <property type="project" value="UniProtKB-SubCell"/>
</dbReference>
<dbReference type="GO" id="GO:0003676">
    <property type="term" value="F:nucleic acid binding"/>
    <property type="evidence" value="ECO:0007669"/>
    <property type="project" value="InterPro"/>
</dbReference>
<dbReference type="GO" id="GO:0055046">
    <property type="term" value="P:microgametogenesis"/>
    <property type="evidence" value="ECO:0000315"/>
    <property type="project" value="UniProtKB"/>
</dbReference>
<dbReference type="GO" id="GO:0048481">
    <property type="term" value="P:plant ovule development"/>
    <property type="evidence" value="ECO:0000315"/>
    <property type="project" value="UniProtKB"/>
</dbReference>
<dbReference type="GO" id="GO:0009555">
    <property type="term" value="P:pollen development"/>
    <property type="evidence" value="ECO:0000315"/>
    <property type="project" value="UniProtKB"/>
</dbReference>
<dbReference type="GO" id="GO:0009846">
    <property type="term" value="P:pollen germination"/>
    <property type="evidence" value="ECO:0000315"/>
    <property type="project" value="UniProtKB"/>
</dbReference>
<dbReference type="FunFam" id="1.10.150.910:FF:000002">
    <property type="entry name" value="Splicing factor 3B subunit 3"/>
    <property type="match status" value="1"/>
</dbReference>
<dbReference type="FunFam" id="2.130.10.10:FF:000027">
    <property type="entry name" value="Splicing factor 3B subunit 3"/>
    <property type="match status" value="1"/>
</dbReference>
<dbReference type="FunFam" id="2.130.10.10:FF:000041">
    <property type="entry name" value="Splicing factor 3b subunit 3"/>
    <property type="match status" value="1"/>
</dbReference>
<dbReference type="Gene3D" id="1.10.150.910">
    <property type="match status" value="1"/>
</dbReference>
<dbReference type="Gene3D" id="2.130.10.10">
    <property type="entry name" value="YVTN repeat-like/Quinoprotein amine dehydrogenase"/>
    <property type="match status" value="3"/>
</dbReference>
<dbReference type="InterPro" id="IPR018846">
    <property type="entry name" value="Beta-prop_RSE1/DDB1/CPSF1_1st"/>
</dbReference>
<dbReference type="InterPro" id="IPR004871">
    <property type="entry name" value="Cleavage/polyA-sp_fac_asu_C"/>
</dbReference>
<dbReference type="InterPro" id="IPR011044">
    <property type="entry name" value="Quino_amine_DH_bsu"/>
</dbReference>
<dbReference type="InterPro" id="IPR050358">
    <property type="entry name" value="RSE1/DDB1/CFT1/CPSF1"/>
</dbReference>
<dbReference type="InterPro" id="IPR015943">
    <property type="entry name" value="WD40/YVTN_repeat-like_dom_sf"/>
</dbReference>
<dbReference type="InterPro" id="IPR036322">
    <property type="entry name" value="WD40_repeat_dom_sf"/>
</dbReference>
<dbReference type="PANTHER" id="PTHR10644">
    <property type="entry name" value="DNA REPAIR/RNA PROCESSING CPSF FAMILY"/>
    <property type="match status" value="1"/>
</dbReference>
<dbReference type="Pfam" id="PF10433">
    <property type="entry name" value="Beta-prop_RSE1_1st"/>
    <property type="match status" value="1"/>
</dbReference>
<dbReference type="Pfam" id="PF23726">
    <property type="entry name" value="Beta-prop_RSE1_2nd"/>
    <property type="match status" value="1"/>
</dbReference>
<dbReference type="Pfam" id="PF03178">
    <property type="entry name" value="CPSF_A"/>
    <property type="match status" value="1"/>
</dbReference>
<dbReference type="SUPFAM" id="SSF50978">
    <property type="entry name" value="WD40 repeat-like"/>
    <property type="match status" value="1"/>
</dbReference>
<dbReference type="SUPFAM" id="SSF50969">
    <property type="entry name" value="YVTN repeat-like/Quinoprotein amine dehydrogenase"/>
    <property type="match status" value="1"/>
</dbReference>
<comment type="function">
    <text evidence="1 3">Subunit of the splicing factor SF3B required for 'A' complex assembly formed by the stable binding of U2 snRNP to the branchpoint sequence (BPS) in pre-mRNA. Sequence independent binding of SF3A/SF3B complex upstream of the branch site is essential, it may anchor U2 snRNP to the pre-mRNA. May also be involved in the assembly of the 'E' complex. Also belongs to the minor U12-dependent spliceosome, which is involved in the splicing of rare class of nuclear pre-mRNA intron (By similarity). Required for pollen and ovule development, especially during the transition from microspore to the bicellular stage in pollen development. Involved in the accumulation of QRT1 and QRT3 (PubMed:21680607).</text>
</comment>
<comment type="subunit">
    <text evidence="1">Identified in the spliceosome C complex. Component of the U11/U12 snRNPs that are part of the U12-type spliceosome. Component of splicing factor SF3B complex.</text>
</comment>
<comment type="subcellular location">
    <subcellularLocation>
        <location evidence="1">Nucleus</location>
    </subcellularLocation>
</comment>
<comment type="tissue specificity">
    <text evidence="3">Expressed at low levels in roots, leaves, inflorescence and, to a lower extent, in siliques.</text>
</comment>
<comment type="disruption phenotype">
    <text evidence="3">The double mutant sap130a sap130b displays a slight reduction in the size of aerial organs and in the number of lateral roots, and is impaired in reproduction due to a reduced production of viable pollen and impaired female reproductive organs. Defect in the transition from microspore to the bicellular stage in pollen development. Reduced expression of QRT1 and QRT3.</text>
</comment>
<comment type="similarity">
    <text evidence="5">Belongs to the RSE1 family.</text>
</comment>
<accession>P0DKL4</accession>
<accession>Q570A5</accession>
<accession>Q9LD60</accession>
<gene>
    <name evidence="4" type="primary">SAP130A</name>
    <name evidence="6" type="ordered locus">At3g55200</name>
    <name evidence="7" type="ORF">T26I12.80</name>
</gene>
<organism>
    <name type="scientific">Arabidopsis thaliana</name>
    <name type="common">Mouse-ear cress</name>
    <dbReference type="NCBI Taxonomy" id="3702"/>
    <lineage>
        <taxon>Eukaryota</taxon>
        <taxon>Viridiplantae</taxon>
        <taxon>Streptophyta</taxon>
        <taxon>Embryophyta</taxon>
        <taxon>Tracheophyta</taxon>
        <taxon>Spermatophyta</taxon>
        <taxon>Magnoliopsida</taxon>
        <taxon>eudicotyledons</taxon>
        <taxon>Gunneridae</taxon>
        <taxon>Pentapetalae</taxon>
        <taxon>rosids</taxon>
        <taxon>malvids</taxon>
        <taxon>Brassicales</taxon>
        <taxon>Brassicaceae</taxon>
        <taxon>Camelineae</taxon>
        <taxon>Arabidopsis</taxon>
    </lineage>
</organism>
<reference key="1">
    <citation type="journal article" date="2000" name="Nature">
        <title>Sequence and analysis of chromosome 3 of the plant Arabidopsis thaliana.</title>
        <authorList>
            <person name="Salanoubat M."/>
            <person name="Lemcke K."/>
            <person name="Rieger M."/>
            <person name="Ansorge W."/>
            <person name="Unseld M."/>
            <person name="Fartmann B."/>
            <person name="Valle G."/>
            <person name="Bloecker H."/>
            <person name="Perez-Alonso M."/>
            <person name="Obermaier B."/>
            <person name="Delseny M."/>
            <person name="Boutry M."/>
            <person name="Grivell L.A."/>
            <person name="Mache R."/>
            <person name="Puigdomenech P."/>
            <person name="De Simone V."/>
            <person name="Choisne N."/>
            <person name="Artiguenave F."/>
            <person name="Robert C."/>
            <person name="Brottier P."/>
            <person name="Wincker P."/>
            <person name="Cattolico L."/>
            <person name="Weissenbach J."/>
            <person name="Saurin W."/>
            <person name="Quetier F."/>
            <person name="Schaefer M."/>
            <person name="Mueller-Auer S."/>
            <person name="Gabel C."/>
            <person name="Fuchs M."/>
            <person name="Benes V."/>
            <person name="Wurmbach E."/>
            <person name="Drzonek H."/>
            <person name="Erfle H."/>
            <person name="Jordan N."/>
            <person name="Bangert S."/>
            <person name="Wiedelmann R."/>
            <person name="Kranz H."/>
            <person name="Voss H."/>
            <person name="Holland R."/>
            <person name="Brandt P."/>
            <person name="Nyakatura G."/>
            <person name="Vezzi A."/>
            <person name="D'Angelo M."/>
            <person name="Pallavicini A."/>
            <person name="Toppo S."/>
            <person name="Simionati B."/>
            <person name="Conrad A."/>
            <person name="Hornischer K."/>
            <person name="Kauer G."/>
            <person name="Loehnert T.-H."/>
            <person name="Nordsiek G."/>
            <person name="Reichelt J."/>
            <person name="Scharfe M."/>
            <person name="Schoen O."/>
            <person name="Bargues M."/>
            <person name="Terol J."/>
            <person name="Climent J."/>
            <person name="Navarro P."/>
            <person name="Collado C."/>
            <person name="Perez-Perez A."/>
            <person name="Ottenwaelder B."/>
            <person name="Duchemin D."/>
            <person name="Cooke R."/>
            <person name="Laudie M."/>
            <person name="Berger-Llauro C."/>
            <person name="Purnelle B."/>
            <person name="Masuy D."/>
            <person name="de Haan M."/>
            <person name="Maarse A.C."/>
            <person name="Alcaraz J.-P."/>
            <person name="Cottet A."/>
            <person name="Casacuberta E."/>
            <person name="Monfort A."/>
            <person name="Argiriou A."/>
            <person name="Flores M."/>
            <person name="Liguori R."/>
            <person name="Vitale D."/>
            <person name="Mannhaupt G."/>
            <person name="Haase D."/>
            <person name="Schoof H."/>
            <person name="Rudd S."/>
            <person name="Zaccaria P."/>
            <person name="Mewes H.-W."/>
            <person name="Mayer K.F.X."/>
            <person name="Kaul S."/>
            <person name="Town C.D."/>
            <person name="Koo H.L."/>
            <person name="Tallon L.J."/>
            <person name="Jenkins J."/>
            <person name="Rooney T."/>
            <person name="Rizzo M."/>
            <person name="Walts A."/>
            <person name="Utterback T."/>
            <person name="Fujii C.Y."/>
            <person name="Shea T.P."/>
            <person name="Creasy T.H."/>
            <person name="Haas B."/>
            <person name="Maiti R."/>
            <person name="Wu D."/>
            <person name="Peterson J."/>
            <person name="Van Aken S."/>
            <person name="Pai G."/>
            <person name="Militscher J."/>
            <person name="Sellers P."/>
            <person name="Gill J.E."/>
            <person name="Feldblyum T.V."/>
            <person name="Preuss D."/>
            <person name="Lin X."/>
            <person name="Nierman W.C."/>
            <person name="Salzberg S.L."/>
            <person name="White O."/>
            <person name="Venter J.C."/>
            <person name="Fraser C.M."/>
            <person name="Kaneko T."/>
            <person name="Nakamura Y."/>
            <person name="Sato S."/>
            <person name="Kato T."/>
            <person name="Asamizu E."/>
            <person name="Sasamoto S."/>
            <person name="Kimura T."/>
            <person name="Idesawa K."/>
            <person name="Kawashima K."/>
            <person name="Kishida Y."/>
            <person name="Kiyokawa C."/>
            <person name="Kohara M."/>
            <person name="Matsumoto M."/>
            <person name="Matsuno A."/>
            <person name="Muraki A."/>
            <person name="Nakayama S."/>
            <person name="Nakazaki N."/>
            <person name="Shinpo S."/>
            <person name="Takeuchi C."/>
            <person name="Wada T."/>
            <person name="Watanabe A."/>
            <person name="Yamada M."/>
            <person name="Yasuda M."/>
            <person name="Tabata S."/>
        </authorList>
    </citation>
    <scope>NUCLEOTIDE SEQUENCE [LARGE SCALE GENOMIC DNA]</scope>
    <source>
        <strain>cv. Columbia</strain>
    </source>
</reference>
<reference key="2">
    <citation type="journal article" date="2017" name="Plant J.">
        <title>Araport11: a complete reannotation of the Arabidopsis thaliana reference genome.</title>
        <authorList>
            <person name="Cheng C.Y."/>
            <person name="Krishnakumar V."/>
            <person name="Chan A.P."/>
            <person name="Thibaud-Nissen F."/>
            <person name="Schobel S."/>
            <person name="Town C.D."/>
        </authorList>
    </citation>
    <scope>GENOME REANNOTATION</scope>
    <source>
        <strain>cv. Columbia</strain>
    </source>
</reference>
<reference key="3">
    <citation type="submission" date="2005-03" db="EMBL/GenBank/DDBJ databases">
        <title>Large-scale analysis of RIKEN Arabidopsis full-length (RAFL) cDNAs.</title>
        <authorList>
            <person name="Totoki Y."/>
            <person name="Seki M."/>
            <person name="Ishida J."/>
            <person name="Nakajima M."/>
            <person name="Enju A."/>
            <person name="Kamiya A."/>
            <person name="Narusaka M."/>
            <person name="Shin-i T."/>
            <person name="Nakagawa M."/>
            <person name="Sakamoto N."/>
            <person name="Oishi K."/>
            <person name="Kohara Y."/>
            <person name="Kobayashi M."/>
            <person name="Toyoda A."/>
            <person name="Sakaki Y."/>
            <person name="Sakurai T."/>
            <person name="Iida K."/>
            <person name="Akiyama K."/>
            <person name="Satou M."/>
            <person name="Toyoda T."/>
            <person name="Konagaya A."/>
            <person name="Carninci P."/>
            <person name="Kawai J."/>
            <person name="Hayashizaki Y."/>
            <person name="Shinozaki K."/>
        </authorList>
    </citation>
    <scope>NUCLEOTIDE SEQUENCE [LARGE SCALE MRNA] OF 1050-1214</scope>
    <source>
        <strain>cv. Columbia</strain>
    </source>
</reference>
<reference key="4">
    <citation type="journal article" date="2005" name="RNA">
        <title>Evolutionary conservation of minor U12-type spliceosome between plants and humans.</title>
        <authorList>
            <person name="Lorkovic Z.J."/>
            <person name="Lehner R."/>
            <person name="Forstner C."/>
            <person name="Barta A."/>
        </authorList>
    </citation>
    <scope>GENE FAMILY</scope>
</reference>
<reference key="5">
    <citation type="journal article" date="2011" name="Plant Cell Physiol.">
        <title>AtSAP130/AtSF3b-3 function is required for reproduction in Arabidopsis thaliana.</title>
        <authorList>
            <person name="Aki S."/>
            <person name="Nakai H."/>
            <person name="Aoyama T."/>
            <person name="Oka A."/>
            <person name="Tsuge T."/>
        </authorList>
    </citation>
    <scope>FUNCTION</scope>
    <scope>DISRUPTION PHENOTYPE</scope>
    <scope>TISSUE SPECIFICITY</scope>
    <scope>GENE FAMILY</scope>
    <scope>NOMENCLATURE</scope>
    <source>
        <strain>cv. Columbia</strain>
    </source>
</reference>
<protein>
    <recommendedName>
        <fullName evidence="4">Spliceosome-associated protein 130 A</fullName>
        <shortName evidence="4">AtSAP130a</shortName>
        <shortName evidence="4">SAP 130 A</shortName>
    </recommendedName>
    <alternativeName>
        <fullName evidence="5">Pre-mRNA-splicing factor SF3b 130 kDa subunit A</fullName>
        <shortName evidence="5">SF3b130 A</shortName>
    </alternativeName>
</protein>
<sequence length="1214" mass="134967">MYLYSLTLQQATGIVCAINGNFSGGKTQEIAVARGKILDLLRPDENGKIQTIHSVEVFGAIRSLAQFRLTGAQKDYIVVGSDSGRIVILEYNKEKNVFDKVHQETFGKSGCRRIVPGQYVAVDPKGRAVMIGACEKQKLVYVLNRDTTARLTISSPLEAHKSHTICYSLCGVDCGFDNPIFAAIELDYSEADQDPTGQAASEAQKHLTFYELDLGLNHVSRKWSNPVDNGANMLVTVPGGADGPSGVLVCAENFVIYMNQGHPDVRAVIPRRTDLPAERGVLVVSAAVHKQKTMFFFLIQTEYGDVFKVTLDHNGDHVSELKVKYFDTIPVASSICVLKLGFLFSASEFGNHGLYQFQAIGEEPDVESSSSNLMETEEGFQPVFFQPRRLKNLVRIDQVESLMPLMDMKVLNIFEEETPQIFSLCGRGPRSSLRILRPGLAITEMAVSQLPGQPSAVWTVKKNVSDEFDAYIVVSFTNATLVLSIGEQVEEVNDSGFLDTTPSLAVSLIGDDSLMQVHPNGIRHIREDGRINEWRTPGKRSIVKVGYNRLQVVIALSGGELIYFEADMTGQLMEVEKHEMSGDVACLDIAPVPEGRKRSRFLAVGSYDNTVRILSLDPDDCLQILSVQSVSSAPESLLFLEVQASIGGDDGADHPANLFLNSGLQNGVLFRTVVDMVTGQLSDSRSRFLGLKPPKLFSISVRGRSAMLCLSSRPWLGYIHRGHFHLTPLSYETLEFAAPFSSDQCAEGVVSVAGDALRIFMIDRLGETFNETVVPLRYTPRKFVLHPKRKLLVIIESDQGAFTAEEREAARKECFEAGGVGENGNGNADQMENGADDEDKEDPLSDEQYGYPKAESEKWVSCIRVLDPKTATTTCLLELQDNEAAYSVCTVNFHDKEYGTLLAVGTVKGMQFWPKKNLVAGFIHIYRFVEDGKSLELLHKTQVEGVPLALCQFQGRLLAGIGPVLRLYDLGKKRLLRKCENKLFPNTIISIQTYRDRIYVGDIQESFHYCKYRRDENQLYIFADDCVPRWLTASHHVDFDTMAGADKFGNVYFVRLPQDLSEEIEEDPTGGKIKWEQGKLNGAPNKVDEIVQFHVGDVVTCLQKASMIPGGSESIMYGTVMGSIGALHAFTSRDDVDFFSHLEMHMRQEYPPLCGRDHMAYRSAYFPVKDVIDGDLCEQFPTLPMDLQRKIADELDRTPAEILKKLEDARNKII</sequence>
<evidence type="ECO:0000250" key="1">
    <source>
        <dbReference type="UniProtKB" id="Q15393"/>
    </source>
</evidence>
<evidence type="ECO:0000256" key="2">
    <source>
        <dbReference type="SAM" id="MobiDB-lite"/>
    </source>
</evidence>
<evidence type="ECO:0000269" key="3">
    <source>
    </source>
</evidence>
<evidence type="ECO:0000303" key="4">
    <source>
    </source>
</evidence>
<evidence type="ECO:0000305" key="5"/>
<evidence type="ECO:0000312" key="6">
    <source>
        <dbReference type="Araport" id="AT3G55200"/>
    </source>
</evidence>
<evidence type="ECO:0000312" key="7">
    <source>
        <dbReference type="EMBL" id="CAB75754.1"/>
    </source>
</evidence>
<keyword id="KW-0539">Nucleus</keyword>
<keyword id="KW-1185">Reference proteome</keyword>
<proteinExistence type="evidence at transcript level"/>